<feature type="chain" id="PRO_0000367614" description="Glutamate--tRNA ligase 1">
    <location>
        <begin position="1"/>
        <end position="473"/>
    </location>
</feature>
<feature type="region of interest" description="Disordered" evidence="2">
    <location>
        <begin position="111"/>
        <end position="132"/>
    </location>
</feature>
<feature type="short sequence motif" description="'HIGH' region" evidence="1">
    <location>
        <begin position="11"/>
        <end position="21"/>
    </location>
</feature>
<feature type="short sequence motif" description="'KMSKS' region" evidence="1">
    <location>
        <begin position="240"/>
        <end position="244"/>
    </location>
</feature>
<feature type="binding site" evidence="1">
    <location>
        <position position="243"/>
    </location>
    <ligand>
        <name>ATP</name>
        <dbReference type="ChEBI" id="CHEBI:30616"/>
    </ligand>
</feature>
<accession>B2IKL1</accession>
<name>SYE1_BEII9</name>
<protein>
    <recommendedName>
        <fullName evidence="1">Glutamate--tRNA ligase 1</fullName>
        <ecNumber evidence="1">6.1.1.17</ecNumber>
    </recommendedName>
    <alternativeName>
        <fullName evidence="1">Glutamyl-tRNA synthetase 1</fullName>
        <shortName evidence="1">GluRS 1</shortName>
    </alternativeName>
</protein>
<keyword id="KW-0030">Aminoacyl-tRNA synthetase</keyword>
<keyword id="KW-0067">ATP-binding</keyword>
<keyword id="KW-0963">Cytoplasm</keyword>
<keyword id="KW-0436">Ligase</keyword>
<keyword id="KW-0547">Nucleotide-binding</keyword>
<keyword id="KW-0648">Protein biosynthesis</keyword>
<keyword id="KW-1185">Reference proteome</keyword>
<gene>
    <name evidence="1" type="primary">gltX1</name>
    <name type="ordered locus">Bind_1410</name>
</gene>
<comment type="function">
    <text evidence="1">Catalyzes the attachment of glutamate to tRNA(Glu) in a two-step reaction: glutamate is first activated by ATP to form Glu-AMP and then transferred to the acceptor end of tRNA(Glu).</text>
</comment>
<comment type="catalytic activity">
    <reaction evidence="1">
        <text>tRNA(Glu) + L-glutamate + ATP = L-glutamyl-tRNA(Glu) + AMP + diphosphate</text>
        <dbReference type="Rhea" id="RHEA:23540"/>
        <dbReference type="Rhea" id="RHEA-COMP:9663"/>
        <dbReference type="Rhea" id="RHEA-COMP:9680"/>
        <dbReference type="ChEBI" id="CHEBI:29985"/>
        <dbReference type="ChEBI" id="CHEBI:30616"/>
        <dbReference type="ChEBI" id="CHEBI:33019"/>
        <dbReference type="ChEBI" id="CHEBI:78442"/>
        <dbReference type="ChEBI" id="CHEBI:78520"/>
        <dbReference type="ChEBI" id="CHEBI:456215"/>
        <dbReference type="EC" id="6.1.1.17"/>
    </reaction>
</comment>
<comment type="subunit">
    <text evidence="1">Monomer.</text>
</comment>
<comment type="subcellular location">
    <subcellularLocation>
        <location evidence="1">Cytoplasm</location>
    </subcellularLocation>
</comment>
<comment type="similarity">
    <text evidence="1">Belongs to the class-I aminoacyl-tRNA synthetase family. Glutamate--tRNA ligase type 1 subfamily.</text>
</comment>
<dbReference type="EC" id="6.1.1.17" evidence="1"/>
<dbReference type="EMBL" id="CP001016">
    <property type="protein sequence ID" value="ACB95050.1"/>
    <property type="molecule type" value="Genomic_DNA"/>
</dbReference>
<dbReference type="RefSeq" id="WP_012384407.1">
    <property type="nucleotide sequence ID" value="NC_010581.1"/>
</dbReference>
<dbReference type="SMR" id="B2IKL1"/>
<dbReference type="STRING" id="395963.Bind_1410"/>
<dbReference type="KEGG" id="bid:Bind_1410"/>
<dbReference type="eggNOG" id="COG0008">
    <property type="taxonomic scope" value="Bacteria"/>
</dbReference>
<dbReference type="HOGENOM" id="CLU_015768_6_3_5"/>
<dbReference type="OrthoDB" id="9807503at2"/>
<dbReference type="Proteomes" id="UP000001695">
    <property type="component" value="Chromosome"/>
</dbReference>
<dbReference type="GO" id="GO:0005829">
    <property type="term" value="C:cytosol"/>
    <property type="evidence" value="ECO:0007669"/>
    <property type="project" value="TreeGrafter"/>
</dbReference>
<dbReference type="GO" id="GO:0005524">
    <property type="term" value="F:ATP binding"/>
    <property type="evidence" value="ECO:0007669"/>
    <property type="project" value="UniProtKB-UniRule"/>
</dbReference>
<dbReference type="GO" id="GO:0004818">
    <property type="term" value="F:glutamate-tRNA ligase activity"/>
    <property type="evidence" value="ECO:0007669"/>
    <property type="project" value="UniProtKB-UniRule"/>
</dbReference>
<dbReference type="GO" id="GO:0000049">
    <property type="term" value="F:tRNA binding"/>
    <property type="evidence" value="ECO:0007669"/>
    <property type="project" value="InterPro"/>
</dbReference>
<dbReference type="GO" id="GO:0008270">
    <property type="term" value="F:zinc ion binding"/>
    <property type="evidence" value="ECO:0007669"/>
    <property type="project" value="InterPro"/>
</dbReference>
<dbReference type="GO" id="GO:0006424">
    <property type="term" value="P:glutamyl-tRNA aminoacylation"/>
    <property type="evidence" value="ECO:0007669"/>
    <property type="project" value="UniProtKB-UniRule"/>
</dbReference>
<dbReference type="CDD" id="cd00808">
    <property type="entry name" value="GluRS_core"/>
    <property type="match status" value="1"/>
</dbReference>
<dbReference type="FunFam" id="3.40.50.620:FF:000007">
    <property type="entry name" value="Glutamate--tRNA ligase"/>
    <property type="match status" value="1"/>
</dbReference>
<dbReference type="Gene3D" id="1.10.10.350">
    <property type="match status" value="1"/>
</dbReference>
<dbReference type="Gene3D" id="3.40.50.620">
    <property type="entry name" value="HUPs"/>
    <property type="match status" value="1"/>
</dbReference>
<dbReference type="HAMAP" id="MF_00022">
    <property type="entry name" value="Glu_tRNA_synth_type1"/>
    <property type="match status" value="1"/>
</dbReference>
<dbReference type="InterPro" id="IPR045462">
    <property type="entry name" value="aa-tRNA-synth_I_cd-bd"/>
</dbReference>
<dbReference type="InterPro" id="IPR020751">
    <property type="entry name" value="aa-tRNA-synth_I_codon-bd_sub2"/>
</dbReference>
<dbReference type="InterPro" id="IPR001412">
    <property type="entry name" value="aa-tRNA-synth_I_CS"/>
</dbReference>
<dbReference type="InterPro" id="IPR008925">
    <property type="entry name" value="aa_tRNA-synth_I_cd-bd_sf"/>
</dbReference>
<dbReference type="InterPro" id="IPR004527">
    <property type="entry name" value="Glu-tRNA-ligase_bac/mito"/>
</dbReference>
<dbReference type="InterPro" id="IPR000924">
    <property type="entry name" value="Glu/Gln-tRNA-synth"/>
</dbReference>
<dbReference type="InterPro" id="IPR020058">
    <property type="entry name" value="Glu/Gln-tRNA-synth_Ib_cat-dom"/>
</dbReference>
<dbReference type="InterPro" id="IPR049940">
    <property type="entry name" value="GluQ/Sye"/>
</dbReference>
<dbReference type="InterPro" id="IPR033910">
    <property type="entry name" value="GluRS_core"/>
</dbReference>
<dbReference type="InterPro" id="IPR014729">
    <property type="entry name" value="Rossmann-like_a/b/a_fold"/>
</dbReference>
<dbReference type="NCBIfam" id="TIGR00464">
    <property type="entry name" value="gltX_bact"/>
    <property type="match status" value="1"/>
</dbReference>
<dbReference type="PANTHER" id="PTHR43311">
    <property type="entry name" value="GLUTAMATE--TRNA LIGASE"/>
    <property type="match status" value="1"/>
</dbReference>
<dbReference type="PANTHER" id="PTHR43311:SF2">
    <property type="entry name" value="GLUTAMATE--TRNA LIGASE, MITOCHONDRIAL-RELATED"/>
    <property type="match status" value="1"/>
</dbReference>
<dbReference type="Pfam" id="PF19269">
    <property type="entry name" value="Anticodon_2"/>
    <property type="match status" value="1"/>
</dbReference>
<dbReference type="Pfam" id="PF00749">
    <property type="entry name" value="tRNA-synt_1c"/>
    <property type="match status" value="1"/>
</dbReference>
<dbReference type="PRINTS" id="PR00987">
    <property type="entry name" value="TRNASYNTHGLU"/>
</dbReference>
<dbReference type="SUPFAM" id="SSF48163">
    <property type="entry name" value="An anticodon-binding domain of class I aminoacyl-tRNA synthetases"/>
    <property type="match status" value="1"/>
</dbReference>
<dbReference type="SUPFAM" id="SSF52374">
    <property type="entry name" value="Nucleotidylyl transferase"/>
    <property type="match status" value="1"/>
</dbReference>
<dbReference type="PROSITE" id="PS00178">
    <property type="entry name" value="AA_TRNA_LIGASE_I"/>
    <property type="match status" value="1"/>
</dbReference>
<proteinExistence type="inferred from homology"/>
<organism>
    <name type="scientific">Beijerinckia indica subsp. indica (strain ATCC 9039 / DSM 1715 / NCIMB 8712)</name>
    <dbReference type="NCBI Taxonomy" id="395963"/>
    <lineage>
        <taxon>Bacteria</taxon>
        <taxon>Pseudomonadati</taxon>
        <taxon>Pseudomonadota</taxon>
        <taxon>Alphaproteobacteria</taxon>
        <taxon>Hyphomicrobiales</taxon>
        <taxon>Beijerinckiaceae</taxon>
        <taxon>Beijerinckia</taxon>
    </lineage>
</organism>
<sequence length="473" mass="52471">MPDEVVTRFAPSPTGFLHIGGARTALFNWLFARHAGGRMLLRIEDTDRERSTDAAIAAILDGLSWLGLHWDGDVIYQFQRVARHRDVALSLLEAGQAYYCYATPQELEEMREQARKEGRPPRYDGRWRDRAENDAPSGVKPVIRLKAPRDGETTLDDKVQGKVTWANKDLDDLVLLRSDGTPTYMLAVVVDDHDMGVTQIIRGDDHLTNAARQMQIYQALGWSVPIMAHIPLIHGADGAKLSKRHGALGVDAYRGMGYLPEALRNYLVRLGWSQGDKEFFSTEEMIEAFDLAHVGRSPARFDFAKLENMNGHYLRHADDRHLVDMLSTTLPFLPKGLELAPKFTDERKAQLLAAMPGLKERAKTLVELLDGANFLFAERPLELDAKAQALLDASSRAHIAALVPLFEAAPEWKASALEAIVRAYVAETGVKLGQVAQPLRAALTGRATSPGIFDVLEVLGRDEGLARLRDQAG</sequence>
<evidence type="ECO:0000255" key="1">
    <source>
        <dbReference type="HAMAP-Rule" id="MF_00022"/>
    </source>
</evidence>
<evidence type="ECO:0000256" key="2">
    <source>
        <dbReference type="SAM" id="MobiDB-lite"/>
    </source>
</evidence>
<reference key="1">
    <citation type="journal article" date="2010" name="J. Bacteriol.">
        <title>Complete genome sequence of Beijerinckia indica subsp. indica.</title>
        <authorList>
            <person name="Tamas I."/>
            <person name="Dedysh S.N."/>
            <person name="Liesack W."/>
            <person name="Stott M.B."/>
            <person name="Alam M."/>
            <person name="Murrell J.C."/>
            <person name="Dunfield P.F."/>
        </authorList>
    </citation>
    <scope>NUCLEOTIDE SEQUENCE [LARGE SCALE GENOMIC DNA]</scope>
    <source>
        <strain>ATCC 9039 / DSM 1715 / NCIMB 8712</strain>
    </source>
</reference>